<dbReference type="EMBL" id="AF007866">
    <property type="protein sequence ID" value="AAD09313.1"/>
    <property type="molecule type" value="mRNA"/>
</dbReference>
<dbReference type="EMBL" id="AF487652">
    <property type="protein sequence ID" value="AAL96666.1"/>
    <property type="molecule type" value="Genomic_DNA"/>
</dbReference>
<dbReference type="EMBL" id="AC023632">
    <property type="status" value="NOT_ANNOTATED_CDS"/>
    <property type="molecule type" value="Genomic_DNA"/>
</dbReference>
<dbReference type="EMBL" id="BC033710">
    <property type="protein sequence ID" value="AAH33710.2"/>
    <property type="molecule type" value="mRNA"/>
</dbReference>
<dbReference type="CCDS" id="CCDS59106.1">
    <molecule id="O95073-1"/>
</dbReference>
<dbReference type="RefSeq" id="NP_001243070.1">
    <molecule id="O95073-1"/>
    <property type="nucleotide sequence ID" value="NM_001256141.2"/>
</dbReference>
<dbReference type="SMR" id="O95073"/>
<dbReference type="BioGRID" id="117321">
    <property type="interactions" value="56"/>
</dbReference>
<dbReference type="BioGRID" id="3188904">
    <property type="interactions" value="5"/>
</dbReference>
<dbReference type="FunCoup" id="O95073">
    <property type="interactions" value="1603"/>
</dbReference>
<dbReference type="IntAct" id="O95073">
    <property type="interactions" value="22"/>
</dbReference>
<dbReference type="MINT" id="O95073"/>
<dbReference type="iPTMnet" id="O95073"/>
<dbReference type="PhosphoSitePlus" id="O95073"/>
<dbReference type="BioMuta" id="FSBP"/>
<dbReference type="jPOST" id="O95073"/>
<dbReference type="MassIVE" id="O95073"/>
<dbReference type="PaxDb" id="9606-ENSP00000420405"/>
<dbReference type="PeptideAtlas" id="O95073"/>
<dbReference type="ProteomicsDB" id="50644">
    <molecule id="O95073-1"/>
</dbReference>
<dbReference type="ProteomicsDB" id="50645">
    <molecule id="O95073-2"/>
</dbReference>
<dbReference type="Antibodypedia" id="65416">
    <property type="antibodies" value="55 antibodies from 17 providers"/>
</dbReference>
<dbReference type="DNASU" id="25788"/>
<dbReference type="Ensembl" id="ENST00000481490.3">
    <molecule id="O95073-1"/>
    <property type="protein sequence ID" value="ENSP00000420405.2"/>
    <property type="gene ID" value="ENSG00000265817.4"/>
</dbReference>
<dbReference type="GeneID" id="100861412"/>
<dbReference type="KEGG" id="hsa:100861412"/>
<dbReference type="MANE-Select" id="ENST00000481490.3">
    <property type="protein sequence ID" value="ENSP00000420405.2"/>
    <property type="RefSeq nucleotide sequence ID" value="NM_001256141.2"/>
    <property type="RefSeq protein sequence ID" value="NP_001243070.1"/>
</dbReference>
<dbReference type="UCSC" id="uc003ygm.4">
    <molecule id="O95073-1"/>
    <property type="organism name" value="human"/>
</dbReference>
<dbReference type="AGR" id="HGNC:17228"/>
<dbReference type="AGR" id="HGNC:43653"/>
<dbReference type="CTD" id="100861412"/>
<dbReference type="CTD" id="25788"/>
<dbReference type="DisGeNET" id="100861412"/>
<dbReference type="DisGeNET" id="25788"/>
<dbReference type="GeneCards" id="FSBP"/>
<dbReference type="HGNC" id="HGNC:43653">
    <property type="gene designation" value="FSBP"/>
</dbReference>
<dbReference type="HPA" id="ENSG00000265817">
    <property type="expression patterns" value="Tissue enriched (retina)"/>
</dbReference>
<dbReference type="MIM" id="616306">
    <property type="type" value="gene"/>
</dbReference>
<dbReference type="neXtProt" id="NX_O95073"/>
<dbReference type="OpenTargets" id="ENSG00000265817"/>
<dbReference type="VEuPathDB" id="HostDB:ENSG00000265817"/>
<dbReference type="eggNOG" id="ENOG502QUKT">
    <property type="taxonomic scope" value="Eukaryota"/>
</dbReference>
<dbReference type="GeneTree" id="ENSGT00390000008778"/>
<dbReference type="HOGENOM" id="CLU_080744_0_0_1"/>
<dbReference type="InParanoid" id="O95073"/>
<dbReference type="OMA" id="ERNNLPC"/>
<dbReference type="OrthoDB" id="9890814at2759"/>
<dbReference type="PAN-GO" id="O95073">
    <property type="GO annotations" value="1 GO annotation based on evolutionary models"/>
</dbReference>
<dbReference type="PhylomeDB" id="O95073"/>
<dbReference type="TreeFam" id="TF331896"/>
<dbReference type="PathwayCommons" id="O95073"/>
<dbReference type="SignaLink" id="O95073"/>
<dbReference type="BioGRID-ORCS" id="100861412">
    <property type="hits" value="12 hits in 1133 CRISPR screens"/>
</dbReference>
<dbReference type="BioGRID-ORCS" id="25788">
    <property type="hits" value="15 hits in 1156 CRISPR screens"/>
</dbReference>
<dbReference type="GeneWiki" id="RAD54B"/>
<dbReference type="Pharos" id="O95073">
    <property type="development level" value="Tdark"/>
</dbReference>
<dbReference type="PRO" id="PR:O95073"/>
<dbReference type="Proteomes" id="UP000005640">
    <property type="component" value="Chromosome 8"/>
</dbReference>
<dbReference type="RNAct" id="O95073">
    <property type="molecule type" value="protein"/>
</dbReference>
<dbReference type="Bgee" id="ENSG00000265817">
    <property type="expression patterns" value="Expressed in pigmented layer of retina and 113 other cell types or tissues"/>
</dbReference>
<dbReference type="ExpressionAtlas" id="O95073">
    <property type="expression patterns" value="baseline and differential"/>
</dbReference>
<dbReference type="GO" id="GO:0005654">
    <property type="term" value="C:nucleoplasm"/>
    <property type="evidence" value="ECO:0000314"/>
    <property type="project" value="HPA"/>
</dbReference>
<dbReference type="GO" id="GO:0005634">
    <property type="term" value="C:nucleus"/>
    <property type="evidence" value="ECO:0000314"/>
    <property type="project" value="UniProtKB"/>
</dbReference>
<dbReference type="GO" id="GO:0042802">
    <property type="term" value="F:identical protein binding"/>
    <property type="evidence" value="ECO:0000353"/>
    <property type="project" value="IntAct"/>
</dbReference>
<dbReference type="InterPro" id="IPR042383">
    <property type="entry name" value="FSBP"/>
</dbReference>
<dbReference type="InterPro" id="IPR028002">
    <property type="entry name" value="Myb_DNA-bind_5"/>
</dbReference>
<dbReference type="PANTHER" id="PTHR15386">
    <property type="entry name" value="FIBRINOGEN SILENCER-BINDING PROTEIN"/>
    <property type="match status" value="1"/>
</dbReference>
<dbReference type="PANTHER" id="PTHR15386:SF0">
    <property type="entry name" value="FIBRINOGEN SILENCER-BINDING PROTEIN"/>
    <property type="match status" value="1"/>
</dbReference>
<dbReference type="Pfam" id="PF13873">
    <property type="entry name" value="Myb_DNA-bind_5"/>
    <property type="match status" value="1"/>
</dbReference>
<sequence>MVGKARSSNFTLSEKLDLLKLVKPYVKILEEHTNKHSVIVEKNRCWDIIAVNYNAIGVDRPPRTAQGLRTLYKRLKEYAKQELLQQKETQSDFKSNISEPTKKVMEMIPQISSFCLVRDRNHIQSANLDEEAQAGTSSLQVMLDHHPVAITVEVKQEEDIKPPPPLVLNSQQSDTLEQREEHELVHVMERSLSPSLSSVDMRMTSSPSSIPRRDDFFRHESGEHFRSLLGYDPQILQMLKEEHQIILENQKNFGLYVQEKRDGLKRRQQLEEELLRAKIEVEKLKAIRLRHDLPEYNSL</sequence>
<organism>
    <name type="scientific">Homo sapiens</name>
    <name type="common">Human</name>
    <dbReference type="NCBI Taxonomy" id="9606"/>
    <lineage>
        <taxon>Eukaryota</taxon>
        <taxon>Metazoa</taxon>
        <taxon>Chordata</taxon>
        <taxon>Craniata</taxon>
        <taxon>Vertebrata</taxon>
        <taxon>Euteleostomi</taxon>
        <taxon>Mammalia</taxon>
        <taxon>Eutheria</taxon>
        <taxon>Euarchontoglires</taxon>
        <taxon>Primates</taxon>
        <taxon>Haplorrhini</taxon>
        <taxon>Catarrhini</taxon>
        <taxon>Hominidae</taxon>
        <taxon>Homo</taxon>
    </lineage>
</organism>
<evidence type="ECO:0000269" key="1">
    <source>
    </source>
</evidence>
<evidence type="ECO:0000269" key="2">
    <source ref="2"/>
</evidence>
<evidence type="ECO:0000303" key="3">
    <source>
    </source>
</evidence>
<evidence type="ECO:0007744" key="4">
    <source>
    </source>
</evidence>
<feature type="chain" id="PRO_0000087352" description="Fibrinogen silencer-binding protein">
    <location>
        <begin position="1"/>
        <end position="299"/>
    </location>
</feature>
<feature type="cross-link" description="Glycyl lysine isopeptide (Lys-Gly) (interchain with G-Cter in SUMO2)" evidence="4">
    <location>
        <position position="94"/>
    </location>
</feature>
<feature type="splice variant" id="VSP_010774" description="In isoform 2." evidence="3">
    <location>
        <begin position="1"/>
        <end position="141"/>
    </location>
</feature>
<feature type="sequence variant" id="VAR_019301" description="In dbSNP:rs3136422." evidence="2">
    <original>R</original>
    <variation>K</variation>
    <location>
        <position position="226"/>
    </location>
</feature>
<keyword id="KW-0025">Alternative splicing</keyword>
<keyword id="KW-1017">Isopeptide bond</keyword>
<keyword id="KW-0539">Nucleus</keyword>
<keyword id="KW-1267">Proteomics identification</keyword>
<keyword id="KW-1185">Reference proteome</keyword>
<keyword id="KW-0678">Repressor</keyword>
<keyword id="KW-0804">Transcription</keyword>
<keyword id="KW-0805">Transcription regulation</keyword>
<keyword id="KW-0832">Ubl conjugation</keyword>
<gene>
    <name type="primary">FSBP</name>
</gene>
<comment type="function">
    <text evidence="1">Transcriptional repressor that down-regulates the expression of the fibrinogen gamma chain. Represses transcription of GSK3B gene promoter via its interaction with APBA1.</text>
</comment>
<comment type="subunit">
    <text evidence="1">Interacts with APBA1 (via PDZ 1 and 2 domains).</text>
</comment>
<comment type="interaction">
    <interactant intactId="EBI-1059030">
        <id>O95073</id>
    </interactant>
    <interactant intactId="EBI-744859">
        <id>Q96IX9</id>
        <label>ANKRD36BP1</label>
    </interactant>
    <organismsDiffer>false</organismsDiffer>
    <experiments>3</experiments>
</comment>
<comment type="interaction">
    <interactant intactId="EBI-1059030">
        <id>O95073</id>
    </interactant>
    <interactant intactId="EBI-1166928">
        <id>Q8N5M1</id>
        <label>ATPAF2</label>
    </interactant>
    <organismsDiffer>false</organismsDiffer>
    <experiments>3</experiments>
</comment>
<comment type="interaction">
    <interactant intactId="EBI-1059030">
        <id>O95073</id>
    </interactant>
    <interactant intactId="EBI-396137">
        <id>Q9UJX2</id>
        <label>CDC23</label>
    </interactant>
    <organismsDiffer>false</organismsDiffer>
    <experiments>3</experiments>
</comment>
<comment type="interaction">
    <interactant intactId="EBI-1059030">
        <id>O95073</id>
    </interactant>
    <interactant intactId="EBI-744099">
        <id>Q9H0I2</id>
        <label>ENKD1</label>
    </interactant>
    <organismsDiffer>false</organismsDiffer>
    <experiments>3</experiments>
</comment>
<comment type="interaction">
    <interactant intactId="EBI-1059030">
        <id>O95073</id>
    </interactant>
    <interactant intactId="EBI-10172181">
        <id>Q53SE7</id>
        <label>FLJ13057</label>
    </interactant>
    <organismsDiffer>false</organismsDiffer>
    <experiments>3</experiments>
</comment>
<comment type="interaction">
    <interactant intactId="EBI-1059030">
        <id>O95073</id>
    </interactant>
    <interactant intactId="EBI-1059030">
        <id>O95073</id>
        <label>FSBP</label>
    </interactant>
    <organismsDiffer>false</organismsDiffer>
    <experiments>3</experiments>
</comment>
<comment type="interaction">
    <interactant intactId="EBI-1059030">
        <id>O95073</id>
    </interactant>
    <interactant intactId="EBI-1181405">
        <id>Q13131</id>
        <label>PRKAA1</label>
    </interactant>
    <organismsDiffer>false</organismsDiffer>
    <experiments>3</experiments>
</comment>
<comment type="interaction">
    <interactant intactId="EBI-1059030">
        <id>O95073</id>
    </interactant>
    <interactant intactId="EBI-80140">
        <id>P63165</id>
        <label>SUMO1</label>
    </interactant>
    <organismsDiffer>false</organismsDiffer>
    <experiments>3</experiments>
</comment>
<comment type="interaction">
    <interactant intactId="EBI-1059030">
        <id>O95073</id>
    </interactant>
    <interactant intactId="EBI-954696">
        <id>Q8N8B7</id>
        <label>TCEANC</label>
    </interactant>
    <organismsDiffer>false</organismsDiffer>
    <experiments>3</experiments>
</comment>
<comment type="interaction">
    <interactant intactId="EBI-1059030">
        <id>O95073</id>
    </interactant>
    <interactant intactId="EBI-10249899">
        <id>Q9H614</id>
    </interactant>
    <organismsDiffer>false</organismsDiffer>
    <experiments>3</experiments>
</comment>
<comment type="interaction">
    <interactant intactId="EBI-10696047">
        <id>O95073-2</id>
    </interactant>
    <interactant intactId="EBI-1166928">
        <id>Q8N5M1</id>
        <label>ATPAF2</label>
    </interactant>
    <organismsDiffer>false</organismsDiffer>
    <experiments>3</experiments>
</comment>
<comment type="interaction">
    <interactant intactId="EBI-10696047">
        <id>O95073-2</id>
    </interactant>
    <interactant intactId="EBI-466029">
        <id>P42858</id>
        <label>HTT</label>
    </interactant>
    <organismsDiffer>false</organismsDiffer>
    <experiments>3</experiments>
</comment>
<comment type="interaction">
    <interactant intactId="EBI-10696047">
        <id>O95073-2</id>
    </interactant>
    <interactant intactId="EBI-617403">
        <id>P16885</id>
        <label>PLCG2</label>
    </interactant>
    <organismsDiffer>false</organismsDiffer>
    <experiments>2</experiments>
</comment>
<comment type="interaction">
    <interactant intactId="EBI-10696047">
        <id>O95073-2</id>
    </interactant>
    <interactant intactId="EBI-490630">
        <id>Q9NP31</id>
        <label>SH2D2A</label>
    </interactant>
    <organismsDiffer>false</organismsDiffer>
    <experiments>3</experiments>
</comment>
<comment type="subcellular location">
    <subcellularLocation>
        <location evidence="1">Nucleus</location>
    </subcellularLocation>
</comment>
<comment type="alternative products">
    <event type="alternative splicing"/>
    <isoform>
        <id>O95073-1</id>
        <name>1</name>
        <sequence type="displayed"/>
    </isoform>
    <isoform>
        <id>O95073-2</id>
        <name>2</name>
        <sequence type="described" ref="VSP_010774"/>
    </isoform>
</comment>
<comment type="tissue specificity">
    <text evidence="1">Expressed in multiple tissues including brain.</text>
</comment>
<comment type="miscellaneous">
    <text>Intragenic, in the second intron of RAB54B gene.</text>
</comment>
<proteinExistence type="evidence at protein level"/>
<name>FSBP_HUMAN</name>
<protein>
    <recommendedName>
        <fullName>Fibrinogen silencer-binding protein</fullName>
    </recommendedName>
</protein>
<accession>O95073</accession>
<accession>Q8N4S5</accession>
<reference key="1">
    <citation type="submission" date="1997-06" db="EMBL/GenBank/DDBJ databases">
        <title>A novel transcription repressor that down-regulates the expression of the gamma chain of human fibrinogen.</title>
        <authorList>
            <person name="Hu C.-H."/>
            <person name="Cao Z."/>
            <person name="Chung D.W."/>
            <person name="Davie E.W."/>
        </authorList>
    </citation>
    <scope>NUCLEOTIDE SEQUENCE [MRNA] (ISOFORM 1)</scope>
</reference>
<reference key="2">
    <citation type="submission" date="2002-02" db="EMBL/GenBank/DDBJ databases">
        <authorList>
            <consortium name="SeattleSNPs variation discovery resource"/>
        </authorList>
    </citation>
    <scope>NUCLEOTIDE SEQUENCE [GENOMIC DNA]</scope>
    <scope>VARIANT LYS-226</scope>
</reference>
<reference key="3">
    <citation type="journal article" date="2004" name="Genome Res.">
        <title>The status, quality, and expansion of the NIH full-length cDNA project: the Mammalian Gene Collection (MGC).</title>
        <authorList>
            <consortium name="The MGC Project Team"/>
        </authorList>
    </citation>
    <scope>NUCLEOTIDE SEQUENCE [LARGE SCALE MRNA] (ISOFORM 2)</scope>
    <source>
        <tissue>Uterus</tissue>
    </source>
</reference>
<reference key="4">
    <citation type="journal article" date="2006" name="Nature">
        <title>DNA sequence and analysis of human chromosome 8.</title>
        <authorList>
            <person name="Nusbaum C."/>
            <person name="Mikkelsen T.S."/>
            <person name="Zody M.C."/>
            <person name="Asakawa S."/>
            <person name="Taudien S."/>
            <person name="Garber M."/>
            <person name="Kodira C.D."/>
            <person name="Schueler M.G."/>
            <person name="Shimizu A."/>
            <person name="Whittaker C.A."/>
            <person name="Chang J.L."/>
            <person name="Cuomo C.A."/>
            <person name="Dewar K."/>
            <person name="FitzGerald M.G."/>
            <person name="Yang X."/>
            <person name="Allen N.R."/>
            <person name="Anderson S."/>
            <person name="Asakawa T."/>
            <person name="Blechschmidt K."/>
            <person name="Bloom T."/>
            <person name="Borowsky M.L."/>
            <person name="Butler J."/>
            <person name="Cook A."/>
            <person name="Corum B."/>
            <person name="DeArellano K."/>
            <person name="DeCaprio D."/>
            <person name="Dooley K.T."/>
            <person name="Dorris L. III"/>
            <person name="Engels R."/>
            <person name="Gloeckner G."/>
            <person name="Hafez N."/>
            <person name="Hagopian D.S."/>
            <person name="Hall J.L."/>
            <person name="Ishikawa S.K."/>
            <person name="Jaffe D.B."/>
            <person name="Kamat A."/>
            <person name="Kudoh J."/>
            <person name="Lehmann R."/>
            <person name="Lokitsang T."/>
            <person name="Macdonald P."/>
            <person name="Major J.E."/>
            <person name="Matthews C.D."/>
            <person name="Mauceli E."/>
            <person name="Menzel U."/>
            <person name="Mihalev A.H."/>
            <person name="Minoshima S."/>
            <person name="Murayama Y."/>
            <person name="Naylor J.W."/>
            <person name="Nicol R."/>
            <person name="Nguyen C."/>
            <person name="O'Leary S.B."/>
            <person name="O'Neill K."/>
            <person name="Parker S.C.J."/>
            <person name="Polley A."/>
            <person name="Raymond C.K."/>
            <person name="Reichwald K."/>
            <person name="Rodriguez J."/>
            <person name="Sasaki T."/>
            <person name="Schilhabel M."/>
            <person name="Siddiqui R."/>
            <person name="Smith C.L."/>
            <person name="Sneddon T.P."/>
            <person name="Talamas J.A."/>
            <person name="Tenzin P."/>
            <person name="Topham K."/>
            <person name="Venkataraman V."/>
            <person name="Wen G."/>
            <person name="Yamazaki S."/>
            <person name="Young S.K."/>
            <person name="Zeng Q."/>
            <person name="Zimmer A.R."/>
            <person name="Rosenthal A."/>
            <person name="Birren B.W."/>
            <person name="Platzer M."/>
            <person name="Shimizu N."/>
            <person name="Lander E.S."/>
        </authorList>
    </citation>
    <scope>NUCLEOTIDE SEQUENCE [LARGE SCALE GENOMIC DNA]</scope>
</reference>
<reference key="5">
    <citation type="journal article" date="2010" name="NeuroReport">
        <title>An X11alpha/FSBP complex represses transcription of the GSK3beta gene promoter.</title>
        <authorList>
            <person name="Lau K.F."/>
            <person name="Perkinton M.S."/>
            <person name="Rodriguez L."/>
            <person name="McLoughlin D.M."/>
            <person name="Miller C.C."/>
        </authorList>
    </citation>
    <scope>TISSUE SPECIFICITY</scope>
    <scope>SUBCELLULAR LOCATION</scope>
    <scope>FUNCTION</scope>
    <scope>INTERACTION WITH APBA1</scope>
</reference>
<reference key="6">
    <citation type="journal article" date="2017" name="Nat. Struct. Mol. Biol.">
        <title>Site-specific mapping of the human SUMO proteome reveals co-modification with phosphorylation.</title>
        <authorList>
            <person name="Hendriks I.A."/>
            <person name="Lyon D."/>
            <person name="Young C."/>
            <person name="Jensen L.J."/>
            <person name="Vertegaal A.C."/>
            <person name="Nielsen M.L."/>
        </authorList>
    </citation>
    <scope>SUMOYLATION [LARGE SCALE ANALYSIS] AT LYS-94</scope>
    <scope>IDENTIFICATION BY MASS SPECTROMETRY [LARGE SCALE ANALYSIS]</scope>
</reference>